<reference key="1">
    <citation type="journal article" date="2003" name="DNA Res.">
        <title>Complete genome structure of Gloeobacter violaceus PCC 7421, a cyanobacterium that lacks thylakoids.</title>
        <authorList>
            <person name="Nakamura Y."/>
            <person name="Kaneko T."/>
            <person name="Sato S."/>
            <person name="Mimuro M."/>
            <person name="Miyashita H."/>
            <person name="Tsuchiya T."/>
            <person name="Sasamoto S."/>
            <person name="Watanabe A."/>
            <person name="Kawashima K."/>
            <person name="Kishida Y."/>
            <person name="Kiyokawa C."/>
            <person name="Kohara M."/>
            <person name="Matsumoto M."/>
            <person name="Matsuno A."/>
            <person name="Nakazaki N."/>
            <person name="Shimpo S."/>
            <person name="Takeuchi C."/>
            <person name="Yamada M."/>
            <person name="Tabata S."/>
        </authorList>
    </citation>
    <scope>NUCLEOTIDE SEQUENCE [LARGE SCALE GENOMIC DNA]</scope>
    <source>
        <strain>ATCC 29082 / PCC 7421</strain>
    </source>
</reference>
<organism>
    <name type="scientific">Gloeobacter violaceus (strain ATCC 29082 / PCC 7421)</name>
    <dbReference type="NCBI Taxonomy" id="251221"/>
    <lineage>
        <taxon>Bacteria</taxon>
        <taxon>Bacillati</taxon>
        <taxon>Cyanobacteriota</taxon>
        <taxon>Cyanophyceae</taxon>
        <taxon>Gloeobacterales</taxon>
        <taxon>Gloeobacteraceae</taxon>
        <taxon>Gloeobacter</taxon>
    </lineage>
</organism>
<feature type="chain" id="PRO_0000155279" description="Thymidylate kinase">
    <location>
        <begin position="1"/>
        <end position="212"/>
    </location>
</feature>
<feature type="binding site" evidence="1">
    <location>
        <begin position="7"/>
        <end position="14"/>
    </location>
    <ligand>
        <name>ATP</name>
        <dbReference type="ChEBI" id="CHEBI:30616"/>
    </ligand>
</feature>
<proteinExistence type="inferred from homology"/>
<gene>
    <name evidence="1" type="primary">tmk</name>
    <name type="ordered locus">glr0678</name>
</gene>
<accession>Q7NMT7</accession>
<sequence length="212" mass="23112">MFITFEGGEGCGKTTQLTLLGDWLEKRCHRVVRTREPGGTALGRSLRGLLLDARSEITPTAELLLYATDRAEHLARVVRPALASGAAVLCDRFSDSTVAYQGYGRGLDLGLIERLNAIATGGLLPDLTFWLKLDPQAGLVRRLASNGNTPDRIEAETLAFHQRVHMGFAALANRYPGRIRPVDAGLSVEATAEQIRSAVDVFLNENQSKLEK</sequence>
<evidence type="ECO:0000255" key="1">
    <source>
        <dbReference type="HAMAP-Rule" id="MF_00165"/>
    </source>
</evidence>
<protein>
    <recommendedName>
        <fullName evidence="1">Thymidylate kinase</fullName>
        <ecNumber evidence="1">2.7.4.9</ecNumber>
    </recommendedName>
    <alternativeName>
        <fullName evidence="1">dTMP kinase</fullName>
    </alternativeName>
</protein>
<keyword id="KW-0067">ATP-binding</keyword>
<keyword id="KW-0418">Kinase</keyword>
<keyword id="KW-0545">Nucleotide biosynthesis</keyword>
<keyword id="KW-0547">Nucleotide-binding</keyword>
<keyword id="KW-1185">Reference proteome</keyword>
<keyword id="KW-0808">Transferase</keyword>
<name>KTHY_GLOVI</name>
<dbReference type="EC" id="2.7.4.9" evidence="1"/>
<dbReference type="EMBL" id="BA000045">
    <property type="protein sequence ID" value="BAC88619.1"/>
    <property type="molecule type" value="Genomic_DNA"/>
</dbReference>
<dbReference type="RefSeq" id="NP_923624.1">
    <property type="nucleotide sequence ID" value="NC_005125.1"/>
</dbReference>
<dbReference type="RefSeq" id="WP_011140680.1">
    <property type="nucleotide sequence ID" value="NC_005125.1"/>
</dbReference>
<dbReference type="SMR" id="Q7NMT7"/>
<dbReference type="STRING" id="251221.gene:10758154"/>
<dbReference type="EnsemblBacteria" id="BAC88619">
    <property type="protein sequence ID" value="BAC88619"/>
    <property type="gene ID" value="BAC88619"/>
</dbReference>
<dbReference type="KEGG" id="gvi:glr0678"/>
<dbReference type="PATRIC" id="fig|251221.4.peg.687"/>
<dbReference type="eggNOG" id="COG0125">
    <property type="taxonomic scope" value="Bacteria"/>
</dbReference>
<dbReference type="HOGENOM" id="CLU_049131_0_0_3"/>
<dbReference type="InParanoid" id="Q7NMT7"/>
<dbReference type="OrthoDB" id="9774907at2"/>
<dbReference type="PhylomeDB" id="Q7NMT7"/>
<dbReference type="Proteomes" id="UP000000557">
    <property type="component" value="Chromosome"/>
</dbReference>
<dbReference type="GO" id="GO:0005737">
    <property type="term" value="C:cytoplasm"/>
    <property type="evidence" value="ECO:0000318"/>
    <property type="project" value="GO_Central"/>
</dbReference>
<dbReference type="GO" id="GO:0005829">
    <property type="term" value="C:cytosol"/>
    <property type="evidence" value="ECO:0000318"/>
    <property type="project" value="GO_Central"/>
</dbReference>
<dbReference type="GO" id="GO:0005524">
    <property type="term" value="F:ATP binding"/>
    <property type="evidence" value="ECO:0007669"/>
    <property type="project" value="UniProtKB-UniRule"/>
</dbReference>
<dbReference type="GO" id="GO:0004798">
    <property type="term" value="F:dTMP kinase activity"/>
    <property type="evidence" value="ECO:0000318"/>
    <property type="project" value="GO_Central"/>
</dbReference>
<dbReference type="GO" id="GO:0006233">
    <property type="term" value="P:dTDP biosynthetic process"/>
    <property type="evidence" value="ECO:0000318"/>
    <property type="project" value="GO_Central"/>
</dbReference>
<dbReference type="GO" id="GO:0006235">
    <property type="term" value="P:dTTP biosynthetic process"/>
    <property type="evidence" value="ECO:0000318"/>
    <property type="project" value="GO_Central"/>
</dbReference>
<dbReference type="GO" id="GO:0006227">
    <property type="term" value="P:dUDP biosynthetic process"/>
    <property type="evidence" value="ECO:0000318"/>
    <property type="project" value="GO_Central"/>
</dbReference>
<dbReference type="CDD" id="cd01672">
    <property type="entry name" value="TMPK"/>
    <property type="match status" value="1"/>
</dbReference>
<dbReference type="FunFam" id="3.40.50.300:FF:000225">
    <property type="entry name" value="Thymidylate kinase"/>
    <property type="match status" value="1"/>
</dbReference>
<dbReference type="Gene3D" id="3.40.50.300">
    <property type="entry name" value="P-loop containing nucleotide triphosphate hydrolases"/>
    <property type="match status" value="1"/>
</dbReference>
<dbReference type="HAMAP" id="MF_00165">
    <property type="entry name" value="Thymidylate_kinase"/>
    <property type="match status" value="1"/>
</dbReference>
<dbReference type="InterPro" id="IPR027417">
    <property type="entry name" value="P-loop_NTPase"/>
</dbReference>
<dbReference type="InterPro" id="IPR039430">
    <property type="entry name" value="Thymidylate_kin-like_dom"/>
</dbReference>
<dbReference type="InterPro" id="IPR018095">
    <property type="entry name" value="Thymidylate_kin_CS"/>
</dbReference>
<dbReference type="InterPro" id="IPR018094">
    <property type="entry name" value="Thymidylate_kinase"/>
</dbReference>
<dbReference type="NCBIfam" id="TIGR00041">
    <property type="entry name" value="DTMP_kinase"/>
    <property type="match status" value="1"/>
</dbReference>
<dbReference type="PANTHER" id="PTHR10344">
    <property type="entry name" value="THYMIDYLATE KINASE"/>
    <property type="match status" value="1"/>
</dbReference>
<dbReference type="PANTHER" id="PTHR10344:SF4">
    <property type="entry name" value="UMP-CMP KINASE 2, MITOCHONDRIAL"/>
    <property type="match status" value="1"/>
</dbReference>
<dbReference type="Pfam" id="PF02223">
    <property type="entry name" value="Thymidylate_kin"/>
    <property type="match status" value="1"/>
</dbReference>
<dbReference type="SUPFAM" id="SSF52540">
    <property type="entry name" value="P-loop containing nucleoside triphosphate hydrolases"/>
    <property type="match status" value="1"/>
</dbReference>
<dbReference type="PROSITE" id="PS01331">
    <property type="entry name" value="THYMIDYLATE_KINASE"/>
    <property type="match status" value="1"/>
</dbReference>
<comment type="function">
    <text evidence="1">Phosphorylation of dTMP to form dTDP in both de novo and salvage pathways of dTTP synthesis.</text>
</comment>
<comment type="catalytic activity">
    <reaction evidence="1">
        <text>dTMP + ATP = dTDP + ADP</text>
        <dbReference type="Rhea" id="RHEA:13517"/>
        <dbReference type="ChEBI" id="CHEBI:30616"/>
        <dbReference type="ChEBI" id="CHEBI:58369"/>
        <dbReference type="ChEBI" id="CHEBI:63528"/>
        <dbReference type="ChEBI" id="CHEBI:456216"/>
        <dbReference type="EC" id="2.7.4.9"/>
    </reaction>
</comment>
<comment type="similarity">
    <text evidence="1">Belongs to the thymidylate kinase family.</text>
</comment>